<evidence type="ECO:0000250" key="1">
    <source>
        <dbReference type="UniProtKB" id="P07091"/>
    </source>
</evidence>
<evidence type="ECO:0000250" key="2">
    <source>
        <dbReference type="UniProtKB" id="P26447"/>
    </source>
</evidence>
<evidence type="ECO:0000250" key="3">
    <source>
        <dbReference type="UniProtKB" id="P35466"/>
    </source>
</evidence>
<evidence type="ECO:0000255" key="4">
    <source>
        <dbReference type="PROSITE-ProRule" id="PRU00448"/>
    </source>
</evidence>
<evidence type="ECO:0000305" key="5"/>
<accession>P05942</accession>
<gene>
    <name type="primary">S100a4</name>
</gene>
<reference key="1">
    <citation type="journal article" date="1988" name="Proc. Natl. Acad. Sci. U.S.A.">
        <title>Nerve growth factor induces the genes for two proteins related to a family of calcium-binding proteins in PC12 cells.</title>
        <authorList>
            <person name="Masiakowski P."/>
            <person name="Shooter E.M."/>
        </authorList>
    </citation>
    <scope>NUCLEOTIDE SEQUENCE [MRNA]</scope>
</reference>
<reference key="2">
    <citation type="journal article" date="1987" name="J. Mol. Biol.">
        <title>Molecular cloning and sequence of the gene for p9Ka. A cultured myoepithelial cell protein with strong homology to S-100, a calcium-binding protein.</title>
        <authorList>
            <person name="Barraclough R."/>
            <person name="Savin J."/>
            <person name="Dube S.K."/>
            <person name="Rudland P.S."/>
        </authorList>
    </citation>
    <scope>NUCLEOTIDE SEQUENCE [GENOMIC DNA]</scope>
</reference>
<reference key="3">
    <citation type="journal article" date="1992" name="Oncogene">
        <title>Transformation of normal rat kidney cells by v-K-ras enhances expression of transin 2 and an S-100-related calcium-binding protein.</title>
        <authorList>
            <person name="de Vouge M.W."/>
            <person name="Mukherjee B.B."/>
        </authorList>
    </citation>
    <scope>NUCLEOTIDE SEQUENCE OF 3-101</scope>
</reference>
<keyword id="KW-0007">Acetylation</keyword>
<keyword id="KW-0106">Calcium</keyword>
<keyword id="KW-0963">Cytoplasm</keyword>
<keyword id="KW-0479">Metal-binding</keyword>
<keyword id="KW-0539">Nucleus</keyword>
<keyword id="KW-1185">Reference proteome</keyword>
<keyword id="KW-0677">Repeat</keyword>
<keyword id="KW-0964">Secreted</keyword>
<proteinExistence type="evidence at transcript level"/>
<comment type="function">
    <text evidence="1 2">Calcium-binding protein that plays a role in various cellular processes including motility, angiogenesis, cell differentiation, apoptosis, and autophagy. Increases cell motility and invasiveness by interacting with non-muscle myosin heavy chain (NMMHC) IIA/MYH9 (By similarity). Mechanistically, promotes filament depolymerization and increases the amount of soluble myosin-IIA, resulting in the formation of stable protrusions facilitating chemotaxis (By similarity). Also modulates the pro-apoptotic function of TP53 by binding to its C-terminal transactivation domain within the nucleus and reducing its protein levels (By similarity). Within the extracellular space, stimulates cytokine production including granulocyte colony-stimulating factor and CCL24 from T-lymphocytes (By similarity). In addition, stimulates T-lymphocyte chemotaxis by acting as a chemoattractant complex with PGLYRP1 that promotes lymphocyte migration via CCR5 and CXCR3 receptors (By similarity).</text>
</comment>
<comment type="subunit">
    <text evidence="2">Homodimer. Interacts with PPFIBP1 in a calcium-dependent mode. Interacts with PGLYRP1; this complex acts as a chemoattractant that promotes lymphocyte movement. Interacts with MYH9; this interaction increases cell motility. Interacts with Annexin 2/ANXA2. Interacts with TP53; this interaction promotes TP53 degradation. Interacts with CCR5 and CXCR3. Interacts with FCGR3A; this interaction inhibits PKC-dependent phosphorylation of FCGR3A.</text>
</comment>
<comment type="subcellular location">
    <subcellularLocation>
        <location evidence="2">Secreted</location>
    </subcellularLocation>
    <subcellularLocation>
        <location evidence="2">Nucleus</location>
    </subcellularLocation>
    <subcellularLocation>
        <location evidence="1">Cytoplasm</location>
    </subcellularLocation>
</comment>
<comment type="induction">
    <text>By nerve growth factor.</text>
</comment>
<comment type="similarity">
    <text evidence="5">Belongs to the S-100 family.</text>
</comment>
<feature type="initiator methionine" description="Removed" evidence="3">
    <location>
        <position position="1"/>
    </location>
</feature>
<feature type="chain" id="PRO_0000143979" description="Protein S100-A4">
    <location>
        <begin position="2"/>
        <end position="101"/>
    </location>
</feature>
<feature type="domain" description="EF-hand 1" evidence="5">
    <location>
        <begin position="12"/>
        <end position="47"/>
    </location>
</feature>
<feature type="domain" description="EF-hand 2" evidence="4">
    <location>
        <begin position="50"/>
        <end position="85"/>
    </location>
</feature>
<feature type="binding site" evidence="5">
    <location>
        <position position="28"/>
    </location>
    <ligand>
        <name>Ca(2+)</name>
        <dbReference type="ChEBI" id="CHEBI:29108"/>
        <label>1</label>
        <note>low affinity</note>
    </ligand>
</feature>
<feature type="binding site" evidence="5">
    <location>
        <position position="33"/>
    </location>
    <ligand>
        <name>Ca(2+)</name>
        <dbReference type="ChEBI" id="CHEBI:29108"/>
        <label>1</label>
        <note>low affinity</note>
    </ligand>
</feature>
<feature type="binding site" evidence="4">
    <location>
        <position position="63"/>
    </location>
    <ligand>
        <name>Ca(2+)</name>
        <dbReference type="ChEBI" id="CHEBI:29108"/>
        <label>2</label>
        <note>high affinity</note>
    </ligand>
</feature>
<feature type="binding site" evidence="4">
    <location>
        <position position="65"/>
    </location>
    <ligand>
        <name>Ca(2+)</name>
        <dbReference type="ChEBI" id="CHEBI:29108"/>
        <label>2</label>
        <note>high affinity</note>
    </ligand>
</feature>
<feature type="binding site" evidence="4">
    <location>
        <position position="67"/>
    </location>
    <ligand>
        <name>Ca(2+)</name>
        <dbReference type="ChEBI" id="CHEBI:29108"/>
        <label>2</label>
        <note>high affinity</note>
    </ligand>
</feature>
<feature type="binding site" evidence="4">
    <location>
        <position position="69"/>
    </location>
    <ligand>
        <name>Ca(2+)</name>
        <dbReference type="ChEBI" id="CHEBI:29108"/>
        <label>2</label>
        <note>high affinity</note>
    </ligand>
</feature>
<feature type="binding site" evidence="4">
    <location>
        <position position="74"/>
    </location>
    <ligand>
        <name>Ca(2+)</name>
        <dbReference type="ChEBI" id="CHEBI:29108"/>
        <label>2</label>
        <note>high affinity</note>
    </ligand>
</feature>
<feature type="modified residue" description="N-acetylalanine" evidence="3">
    <location>
        <position position="2"/>
    </location>
</feature>
<feature type="modified residue" description="N6-acetyllysine" evidence="2">
    <location>
        <position position="35"/>
    </location>
</feature>
<organism>
    <name type="scientific">Rattus norvegicus</name>
    <name type="common">Rat</name>
    <dbReference type="NCBI Taxonomy" id="10116"/>
    <lineage>
        <taxon>Eukaryota</taxon>
        <taxon>Metazoa</taxon>
        <taxon>Chordata</taxon>
        <taxon>Craniata</taxon>
        <taxon>Vertebrata</taxon>
        <taxon>Euteleostomi</taxon>
        <taxon>Mammalia</taxon>
        <taxon>Eutheria</taxon>
        <taxon>Euarchontoglires</taxon>
        <taxon>Glires</taxon>
        <taxon>Rodentia</taxon>
        <taxon>Myomorpha</taxon>
        <taxon>Muroidea</taxon>
        <taxon>Muridae</taxon>
        <taxon>Murinae</taxon>
        <taxon>Rattus</taxon>
    </lineage>
</organism>
<sequence length="101" mass="11776">MARPLEEALDVIVSTFHKYSGNEGDKFKLNKTELKELLTRELPSFLGRRTDEAAFQKLMNNLDSNRDNEVDFQEYCVFLSCIAMMCNEFFEGCPDKEPRKK</sequence>
<protein>
    <recommendedName>
        <fullName>Protein S100-A4</fullName>
    </recommendedName>
    <alternativeName>
        <fullName>Metastasin</fullName>
    </alternativeName>
    <alternativeName>
        <fullName>Nerve growth factor-induced protein 42A</fullName>
    </alternativeName>
    <alternativeName>
        <fullName>P9K</fullName>
    </alternativeName>
    <alternativeName>
        <fullName>Placental calcium-binding protein</fullName>
    </alternativeName>
    <alternativeName>
        <fullName>S100 calcium-binding protein A4</fullName>
    </alternativeName>
</protein>
<dbReference type="EMBL" id="X06916">
    <property type="protein sequence ID" value="CAA30014.1"/>
    <property type="molecule type" value="Genomic_DNA"/>
</dbReference>
<dbReference type="EMBL" id="J03628">
    <property type="protein sequence ID" value="AAA42098.1"/>
    <property type="molecule type" value="mRNA"/>
</dbReference>
<dbReference type="EMBL" id="X64022">
    <property type="status" value="NOT_ANNOTATED_CDS"/>
    <property type="molecule type" value="mRNA"/>
</dbReference>
<dbReference type="EMBL" id="X64023">
    <property type="status" value="NOT_ANNOTATED_CDS"/>
    <property type="molecule type" value="mRNA"/>
</dbReference>
<dbReference type="PIR" id="S01759">
    <property type="entry name" value="S01759"/>
</dbReference>
<dbReference type="RefSeq" id="NP_036750.1">
    <property type="nucleotide sequence ID" value="NM_012618.2"/>
</dbReference>
<dbReference type="RefSeq" id="XP_006232654.1">
    <property type="nucleotide sequence ID" value="XM_006232592.5"/>
</dbReference>
<dbReference type="SMR" id="P05942"/>
<dbReference type="FunCoup" id="P05942">
    <property type="interactions" value="176"/>
</dbReference>
<dbReference type="STRING" id="10116.ENSRNOP00000015958"/>
<dbReference type="iPTMnet" id="P05942"/>
<dbReference type="PhosphoSitePlus" id="P05942"/>
<dbReference type="jPOST" id="P05942"/>
<dbReference type="PaxDb" id="10116-ENSRNOP00000015958"/>
<dbReference type="DNASU" id="24615"/>
<dbReference type="Ensembl" id="ENSRNOT00000015958.5">
    <property type="protein sequence ID" value="ENSRNOP00000015958.1"/>
    <property type="gene ID" value="ENSRNOG00000011821.5"/>
</dbReference>
<dbReference type="GeneID" id="24615"/>
<dbReference type="KEGG" id="rno:24615"/>
<dbReference type="UCSC" id="RGD:3245">
    <property type="organism name" value="rat"/>
</dbReference>
<dbReference type="AGR" id="RGD:3245"/>
<dbReference type="CTD" id="6275"/>
<dbReference type="RGD" id="3245">
    <property type="gene designation" value="S100a4"/>
</dbReference>
<dbReference type="eggNOG" id="ENOG502S4AU">
    <property type="taxonomic scope" value="Eukaryota"/>
</dbReference>
<dbReference type="GeneTree" id="ENSGT00940000161276"/>
<dbReference type="HOGENOM" id="CLU_138624_2_0_1"/>
<dbReference type="InParanoid" id="P05942"/>
<dbReference type="OMA" id="QDLPDKM"/>
<dbReference type="OrthoDB" id="8881129at2759"/>
<dbReference type="PhylomeDB" id="P05942"/>
<dbReference type="TreeFam" id="TF332727"/>
<dbReference type="PRO" id="PR:P05942"/>
<dbReference type="Proteomes" id="UP000002494">
    <property type="component" value="Chromosome 2"/>
</dbReference>
<dbReference type="Bgee" id="ENSRNOG00000011821">
    <property type="expression patterns" value="Expressed in lung and 20 other cell types or tissues"/>
</dbReference>
<dbReference type="GO" id="GO:0005829">
    <property type="term" value="C:cytosol"/>
    <property type="evidence" value="ECO:0007669"/>
    <property type="project" value="Ensembl"/>
</dbReference>
<dbReference type="GO" id="GO:0005615">
    <property type="term" value="C:extracellular space"/>
    <property type="evidence" value="ECO:0000266"/>
    <property type="project" value="RGD"/>
</dbReference>
<dbReference type="GO" id="GO:0005654">
    <property type="term" value="C:nucleoplasm"/>
    <property type="evidence" value="ECO:0007669"/>
    <property type="project" value="Ensembl"/>
</dbReference>
<dbReference type="GO" id="GO:0005634">
    <property type="term" value="C:nucleus"/>
    <property type="evidence" value="ECO:0000266"/>
    <property type="project" value="RGD"/>
</dbReference>
<dbReference type="GO" id="GO:0048471">
    <property type="term" value="C:perinuclear region of cytoplasm"/>
    <property type="evidence" value="ECO:0000266"/>
    <property type="project" value="RGD"/>
</dbReference>
<dbReference type="GO" id="GO:0003779">
    <property type="term" value="F:actin binding"/>
    <property type="evidence" value="ECO:0000314"/>
    <property type="project" value="RGD"/>
</dbReference>
<dbReference type="GO" id="GO:0005509">
    <property type="term" value="F:calcium ion binding"/>
    <property type="evidence" value="ECO:0000314"/>
    <property type="project" value="RGD"/>
</dbReference>
<dbReference type="GO" id="GO:0048306">
    <property type="term" value="F:calcium-dependent protein binding"/>
    <property type="evidence" value="ECO:0000314"/>
    <property type="project" value="RGD"/>
</dbReference>
<dbReference type="GO" id="GO:0042056">
    <property type="term" value="F:chemoattractant activity"/>
    <property type="evidence" value="ECO:0000266"/>
    <property type="project" value="RGD"/>
</dbReference>
<dbReference type="GO" id="GO:0042802">
    <property type="term" value="F:identical protein binding"/>
    <property type="evidence" value="ECO:0000266"/>
    <property type="project" value="RGD"/>
</dbReference>
<dbReference type="GO" id="GO:0044877">
    <property type="term" value="F:protein-containing complex binding"/>
    <property type="evidence" value="ECO:0000304"/>
    <property type="project" value="RGD"/>
</dbReference>
<dbReference type="GO" id="GO:0050786">
    <property type="term" value="F:RAGE receptor binding"/>
    <property type="evidence" value="ECO:0000266"/>
    <property type="project" value="RGD"/>
</dbReference>
<dbReference type="GO" id="GO:0046914">
    <property type="term" value="F:transition metal ion binding"/>
    <property type="evidence" value="ECO:0007669"/>
    <property type="project" value="InterPro"/>
</dbReference>
<dbReference type="GO" id="GO:0043123">
    <property type="term" value="P:positive regulation of canonical NF-kappaB signal transduction"/>
    <property type="evidence" value="ECO:0000266"/>
    <property type="project" value="RGD"/>
</dbReference>
<dbReference type="CDD" id="cd00213">
    <property type="entry name" value="S-100"/>
    <property type="match status" value="1"/>
</dbReference>
<dbReference type="FunFam" id="1.10.238.10:FF:000044">
    <property type="entry name" value="Protein S100"/>
    <property type="match status" value="1"/>
</dbReference>
<dbReference type="Gene3D" id="1.10.238.10">
    <property type="entry name" value="EF-hand"/>
    <property type="match status" value="1"/>
</dbReference>
<dbReference type="InterPro" id="IPR011992">
    <property type="entry name" value="EF-hand-dom_pair"/>
</dbReference>
<dbReference type="InterPro" id="IPR018247">
    <property type="entry name" value="EF_Hand_1_Ca_BS"/>
</dbReference>
<dbReference type="InterPro" id="IPR002048">
    <property type="entry name" value="EF_hand_dom"/>
</dbReference>
<dbReference type="InterPro" id="IPR034325">
    <property type="entry name" value="S-100_dom"/>
</dbReference>
<dbReference type="InterPro" id="IPR001751">
    <property type="entry name" value="S100/CaBP7/8-like_CS"/>
</dbReference>
<dbReference type="InterPro" id="IPR013787">
    <property type="entry name" value="S100_Ca-bd_sub"/>
</dbReference>
<dbReference type="PANTHER" id="PTHR11639:SF51">
    <property type="entry name" value="PROTEIN S100-A4"/>
    <property type="match status" value="1"/>
</dbReference>
<dbReference type="PANTHER" id="PTHR11639">
    <property type="entry name" value="S100 CALCIUM-BINDING PROTEIN"/>
    <property type="match status" value="1"/>
</dbReference>
<dbReference type="Pfam" id="PF01023">
    <property type="entry name" value="S_100"/>
    <property type="match status" value="1"/>
</dbReference>
<dbReference type="SMART" id="SM00054">
    <property type="entry name" value="EFh"/>
    <property type="match status" value="1"/>
</dbReference>
<dbReference type="SMART" id="SM01394">
    <property type="entry name" value="S_100"/>
    <property type="match status" value="1"/>
</dbReference>
<dbReference type="SUPFAM" id="SSF47473">
    <property type="entry name" value="EF-hand"/>
    <property type="match status" value="1"/>
</dbReference>
<dbReference type="PROSITE" id="PS00018">
    <property type="entry name" value="EF_HAND_1"/>
    <property type="match status" value="1"/>
</dbReference>
<dbReference type="PROSITE" id="PS50222">
    <property type="entry name" value="EF_HAND_2"/>
    <property type="match status" value="1"/>
</dbReference>
<dbReference type="PROSITE" id="PS00303">
    <property type="entry name" value="S100_CABP"/>
    <property type="match status" value="1"/>
</dbReference>
<name>S10A4_RAT</name>